<feature type="chain" id="PRO_0000087975" description="Type II methyltransferase M.MamI">
    <location>
        <begin position="1"/>
        <end position="362"/>
    </location>
</feature>
<organism>
    <name type="scientific">Microbacterium ammoniaphilum</name>
    <dbReference type="NCBI Taxonomy" id="42460"/>
    <lineage>
        <taxon>Bacteria</taxon>
        <taxon>Bacillati</taxon>
        <taxon>Actinomycetota</taxon>
        <taxon>Actinomycetes</taxon>
        <taxon>Micrococcales</taxon>
        <taxon>Microbacteriaceae</taxon>
        <taxon>Microbacterium</taxon>
    </lineage>
</organism>
<evidence type="ECO:0000303" key="1">
    <source>
    </source>
</evidence>
<evidence type="ECO:0000303" key="2">
    <source>
    </source>
</evidence>
<evidence type="ECO:0000305" key="3"/>
<evidence type="ECO:0000305" key="4">
    <source>
    </source>
</evidence>
<comment type="function">
    <text evidence="1 4">A gamma subtype methylase that recognizes the double-stranded sequence 5'-GATNNNNATC-3', methylates A-? on both strands, and protects the DNA from cleavage by the MamI endonuclease.</text>
</comment>
<comment type="catalytic activity">
    <reaction>
        <text>a 2'-deoxyadenosine in DNA + S-adenosyl-L-methionine = an N(6)-methyl-2'-deoxyadenosine in DNA + S-adenosyl-L-homocysteine + H(+)</text>
        <dbReference type="Rhea" id="RHEA:15197"/>
        <dbReference type="Rhea" id="RHEA-COMP:12418"/>
        <dbReference type="Rhea" id="RHEA-COMP:12419"/>
        <dbReference type="ChEBI" id="CHEBI:15378"/>
        <dbReference type="ChEBI" id="CHEBI:57856"/>
        <dbReference type="ChEBI" id="CHEBI:59789"/>
        <dbReference type="ChEBI" id="CHEBI:90615"/>
        <dbReference type="ChEBI" id="CHEBI:90616"/>
        <dbReference type="EC" id="2.1.1.72"/>
    </reaction>
</comment>
<comment type="similarity">
    <text evidence="3">Belongs to the N(4)/N(6)-methyltransferase family.</text>
</comment>
<sequence>MRPLRHAVGSSTVTLETDLTLFPEDLHAPLLGSAGNATVDELALAARFDGLHQLLYTRGGVRPTNAAIEEVGKLLLLRLWLSRDDEASVDGVGLRALFDGAVPDESVVEVTKKAFTQVLTVDRMSLRAVDGSSRPLWPYDEPFRLAEPTVLQSALALVNEILGGGTRVADPLGTAFDAFLSGRYDHSGGLGTYLTPSSVARMMAEVVLDLLSSDALADVRAPIIADPFCGTGRFLVAAFDAAEERHENVDLAGLLDGGLVGADQSTTAIAKSGLNLLLYGAQQPEVYAVADSMTDPGLDRLRGTLAAVLTNPPFGGGKYDDALGIDRTRELFPSVRPNRPMDPRLLDSRCLSNFCDPGESLG</sequence>
<proteinExistence type="inferred from homology"/>
<protein>
    <recommendedName>
        <fullName evidence="1">Type II methyltransferase M.MamI</fullName>
        <shortName evidence="2">M.MamI</shortName>
        <ecNumber>2.1.1.72</ecNumber>
    </recommendedName>
    <alternativeName>
        <fullName>Adenine-specific methyltransferase MamI</fullName>
    </alternativeName>
    <alternativeName>
        <fullName>Modification methylase MamI</fullName>
    </alternativeName>
</protein>
<reference key="1">
    <citation type="journal article" date="1996" name="Gene">
        <title>Cloning and characterization of the MamI restriction-modification system from Microbacterium ammoniaphilum in Escherichia coli.</title>
        <authorList>
            <person name="Striebel H.-M."/>
            <person name="Seeber S."/>
            <person name="Jarsch M."/>
            <person name="Kessler C."/>
        </authorList>
    </citation>
    <scope>NUCLEOTIDE SEQUENCE [GENOMIC DNA]</scope>
    <scope>FUNCTION</scope>
    <source>
        <strain>ATCC 15354 / DSM 20156 / BCRC 11670 / NCIMB 10335 / NRRL B-4247</strain>
    </source>
</reference>
<reference key="2">
    <citation type="journal article" date="2003" name="Nucleic Acids Res.">
        <title>A nomenclature for restriction enzymes, DNA methyltransferases, homing endonucleases and their genes.</title>
        <authorList>
            <person name="Roberts R.J."/>
            <person name="Belfort M."/>
            <person name="Bestor T."/>
            <person name="Bhagwat A.S."/>
            <person name="Bickle T.A."/>
            <person name="Bitinaite J."/>
            <person name="Blumenthal R.M."/>
            <person name="Degtyarev S.K."/>
            <person name="Dryden D.T."/>
            <person name="Dybvig K."/>
            <person name="Firman K."/>
            <person name="Gromova E.S."/>
            <person name="Gumport R.I."/>
            <person name="Halford S.E."/>
            <person name="Hattman S."/>
            <person name="Heitman J."/>
            <person name="Hornby D.P."/>
            <person name="Janulaitis A."/>
            <person name="Jeltsch A."/>
            <person name="Josephsen J."/>
            <person name="Kiss A."/>
            <person name="Klaenhammer T.R."/>
            <person name="Kobayashi I."/>
            <person name="Kong H."/>
            <person name="Krueger D.H."/>
            <person name="Lacks S."/>
            <person name="Marinus M.G."/>
            <person name="Miyahara M."/>
            <person name="Morgan R.D."/>
            <person name="Murray N.E."/>
            <person name="Nagaraja V."/>
            <person name="Piekarowicz A."/>
            <person name="Pingoud A."/>
            <person name="Raleigh E."/>
            <person name="Rao D.N."/>
            <person name="Reich N."/>
            <person name="Repin V.E."/>
            <person name="Selker E.U."/>
            <person name="Shaw P.C."/>
            <person name="Stein D.C."/>
            <person name="Stoddard B.L."/>
            <person name="Szybalski W."/>
            <person name="Trautner T.A."/>
            <person name="Van Etten J.L."/>
            <person name="Vitor J.M."/>
            <person name="Wilson G.G."/>
            <person name="Xu S.Y."/>
        </authorList>
    </citation>
    <scope>NOMENCLATURE</scope>
    <scope>SUBTYPE</scope>
</reference>
<gene>
    <name evidence="2" type="primary">mamIM</name>
</gene>
<keyword id="KW-0238">DNA-binding</keyword>
<keyword id="KW-0489">Methyltransferase</keyword>
<keyword id="KW-0680">Restriction system</keyword>
<keyword id="KW-0949">S-adenosyl-L-methionine</keyword>
<keyword id="KW-0808">Transferase</keyword>
<accession>P50190</accession>
<name>MTM1_MICAM</name>
<dbReference type="EC" id="2.1.1.72"/>
<dbReference type="EMBL" id="X79027">
    <property type="protein sequence ID" value="CAA55646.1"/>
    <property type="molecule type" value="Genomic_DNA"/>
</dbReference>
<dbReference type="PIR" id="T45131">
    <property type="entry name" value="T45131"/>
</dbReference>
<dbReference type="SMR" id="P50190"/>
<dbReference type="REBASE" id="3439">
    <property type="entry name" value="M.MamI"/>
</dbReference>
<dbReference type="PRO" id="PR:P50190"/>
<dbReference type="GO" id="GO:0003677">
    <property type="term" value="F:DNA binding"/>
    <property type="evidence" value="ECO:0007669"/>
    <property type="project" value="UniProtKB-KW"/>
</dbReference>
<dbReference type="GO" id="GO:0008170">
    <property type="term" value="F:N-methyltransferase activity"/>
    <property type="evidence" value="ECO:0007669"/>
    <property type="project" value="InterPro"/>
</dbReference>
<dbReference type="GO" id="GO:0009007">
    <property type="term" value="F:site-specific DNA-methyltransferase (adenine-specific) activity"/>
    <property type="evidence" value="ECO:0007669"/>
    <property type="project" value="UniProtKB-EC"/>
</dbReference>
<dbReference type="GO" id="GO:0009307">
    <property type="term" value="P:DNA restriction-modification system"/>
    <property type="evidence" value="ECO:0007669"/>
    <property type="project" value="UniProtKB-KW"/>
</dbReference>
<dbReference type="GO" id="GO:0032259">
    <property type="term" value="P:methylation"/>
    <property type="evidence" value="ECO:0007669"/>
    <property type="project" value="UniProtKB-KW"/>
</dbReference>
<dbReference type="Gene3D" id="3.40.50.150">
    <property type="entry name" value="Vaccinia Virus protein VP39"/>
    <property type="match status" value="1"/>
</dbReference>
<dbReference type="InterPro" id="IPR003356">
    <property type="entry name" value="DNA_methylase_A-5"/>
</dbReference>
<dbReference type="InterPro" id="IPR002052">
    <property type="entry name" value="DNA_methylase_N6_adenine_CS"/>
</dbReference>
<dbReference type="InterPro" id="IPR029063">
    <property type="entry name" value="SAM-dependent_MTases_sf"/>
</dbReference>
<dbReference type="InterPro" id="IPR052916">
    <property type="entry name" value="Type-I_RE_MTase_Subunit"/>
</dbReference>
<dbReference type="PANTHER" id="PTHR42998:SF1">
    <property type="entry name" value="TYPE I RESTRICTION ENZYME HINDI METHYLASE SUBUNIT"/>
    <property type="match status" value="1"/>
</dbReference>
<dbReference type="PANTHER" id="PTHR42998">
    <property type="entry name" value="TYPE I RESTRICTION ENZYME HINDVIIP M PROTEIN-RELATED"/>
    <property type="match status" value="1"/>
</dbReference>
<dbReference type="Pfam" id="PF02384">
    <property type="entry name" value="N6_Mtase"/>
    <property type="match status" value="1"/>
</dbReference>
<dbReference type="PRINTS" id="PR00507">
    <property type="entry name" value="N12N6MTFRASE"/>
</dbReference>
<dbReference type="SUPFAM" id="SSF53335">
    <property type="entry name" value="S-adenosyl-L-methionine-dependent methyltransferases"/>
    <property type="match status" value="1"/>
</dbReference>
<dbReference type="PROSITE" id="PS00092">
    <property type="entry name" value="N6_MTASE"/>
    <property type="match status" value="1"/>
</dbReference>